<protein>
    <recommendedName>
        <fullName evidence="1">ATP-dependent Clp protease ATP-binding subunit ClpX</fullName>
    </recommendedName>
</protein>
<feature type="chain" id="PRO_1000024691" description="ATP-dependent Clp protease ATP-binding subunit ClpX">
    <location>
        <begin position="1"/>
        <end position="449"/>
    </location>
</feature>
<feature type="domain" description="ClpX-type ZB" evidence="2">
    <location>
        <begin position="1"/>
        <end position="51"/>
    </location>
</feature>
<feature type="region of interest" description="Disordered" evidence="3">
    <location>
        <begin position="53"/>
        <end position="79"/>
    </location>
</feature>
<feature type="binding site" evidence="2">
    <location>
        <position position="10"/>
    </location>
    <ligand>
        <name>Zn(2+)</name>
        <dbReference type="ChEBI" id="CHEBI:29105"/>
    </ligand>
</feature>
<feature type="binding site" evidence="2">
    <location>
        <position position="13"/>
    </location>
    <ligand>
        <name>Zn(2+)</name>
        <dbReference type="ChEBI" id="CHEBI:29105"/>
    </ligand>
</feature>
<feature type="binding site" evidence="2">
    <location>
        <position position="32"/>
    </location>
    <ligand>
        <name>Zn(2+)</name>
        <dbReference type="ChEBI" id="CHEBI:29105"/>
    </ligand>
</feature>
<feature type="binding site" evidence="2">
    <location>
        <position position="35"/>
    </location>
    <ligand>
        <name>Zn(2+)</name>
        <dbReference type="ChEBI" id="CHEBI:29105"/>
    </ligand>
</feature>
<feature type="binding site" evidence="1">
    <location>
        <begin position="143"/>
        <end position="150"/>
    </location>
    <ligand>
        <name>ATP</name>
        <dbReference type="ChEBI" id="CHEBI:30616"/>
    </ligand>
</feature>
<organism>
    <name type="scientific">Synechococcus sp. (strain RCC307)</name>
    <dbReference type="NCBI Taxonomy" id="316278"/>
    <lineage>
        <taxon>Bacteria</taxon>
        <taxon>Bacillati</taxon>
        <taxon>Cyanobacteriota</taxon>
        <taxon>Cyanophyceae</taxon>
        <taxon>Synechococcales</taxon>
        <taxon>Synechococcaceae</taxon>
        <taxon>Synechococcus</taxon>
    </lineage>
</organism>
<evidence type="ECO:0000255" key="1">
    <source>
        <dbReference type="HAMAP-Rule" id="MF_00175"/>
    </source>
</evidence>
<evidence type="ECO:0000255" key="2">
    <source>
        <dbReference type="PROSITE-ProRule" id="PRU01250"/>
    </source>
</evidence>
<evidence type="ECO:0000256" key="3">
    <source>
        <dbReference type="SAM" id="MobiDB-lite"/>
    </source>
</evidence>
<accession>A5GQ09</accession>
<proteinExistence type="inferred from homology"/>
<name>CLPX_SYNR3</name>
<keyword id="KW-0067">ATP-binding</keyword>
<keyword id="KW-0143">Chaperone</keyword>
<keyword id="KW-0479">Metal-binding</keyword>
<keyword id="KW-0547">Nucleotide-binding</keyword>
<keyword id="KW-1185">Reference proteome</keyword>
<keyword id="KW-0862">Zinc</keyword>
<comment type="function">
    <text evidence="1">ATP-dependent specificity component of the Clp protease. It directs the protease to specific substrates. Can perform chaperone functions in the absence of ClpP.</text>
</comment>
<comment type="subunit">
    <text evidence="1">Component of the ClpX-ClpP complex. Forms a hexameric ring that, in the presence of ATP, binds to fourteen ClpP subunits assembled into a disk-like structure with a central cavity, resembling the structure of eukaryotic proteasomes.</text>
</comment>
<comment type="similarity">
    <text evidence="1">Belongs to the ClpX chaperone family.</text>
</comment>
<reference key="1">
    <citation type="submission" date="2006-05" db="EMBL/GenBank/DDBJ databases">
        <authorList>
            <consortium name="Genoscope"/>
        </authorList>
    </citation>
    <scope>NUCLEOTIDE SEQUENCE [LARGE SCALE GENOMIC DNA]</scope>
    <source>
        <strain>RCC307</strain>
    </source>
</reference>
<gene>
    <name evidence="1" type="primary">clpX</name>
    <name type="ordered locus">SynRCC307_0065</name>
</gene>
<dbReference type="EMBL" id="CT978603">
    <property type="protein sequence ID" value="CAK26968.1"/>
    <property type="molecule type" value="Genomic_DNA"/>
</dbReference>
<dbReference type="SMR" id="A5GQ09"/>
<dbReference type="STRING" id="316278.SynRCC307_0065"/>
<dbReference type="KEGG" id="syr:SynRCC307_0065"/>
<dbReference type="eggNOG" id="COG1219">
    <property type="taxonomic scope" value="Bacteria"/>
</dbReference>
<dbReference type="HOGENOM" id="CLU_014218_8_2_3"/>
<dbReference type="OrthoDB" id="9804062at2"/>
<dbReference type="Proteomes" id="UP000001115">
    <property type="component" value="Chromosome"/>
</dbReference>
<dbReference type="GO" id="GO:0009376">
    <property type="term" value="C:HslUV protease complex"/>
    <property type="evidence" value="ECO:0007669"/>
    <property type="project" value="TreeGrafter"/>
</dbReference>
<dbReference type="GO" id="GO:0005524">
    <property type="term" value="F:ATP binding"/>
    <property type="evidence" value="ECO:0007669"/>
    <property type="project" value="UniProtKB-UniRule"/>
</dbReference>
<dbReference type="GO" id="GO:0016887">
    <property type="term" value="F:ATP hydrolysis activity"/>
    <property type="evidence" value="ECO:0007669"/>
    <property type="project" value="InterPro"/>
</dbReference>
<dbReference type="GO" id="GO:0140662">
    <property type="term" value="F:ATP-dependent protein folding chaperone"/>
    <property type="evidence" value="ECO:0007669"/>
    <property type="project" value="InterPro"/>
</dbReference>
<dbReference type="GO" id="GO:0046983">
    <property type="term" value="F:protein dimerization activity"/>
    <property type="evidence" value="ECO:0007669"/>
    <property type="project" value="InterPro"/>
</dbReference>
<dbReference type="GO" id="GO:0051082">
    <property type="term" value="F:unfolded protein binding"/>
    <property type="evidence" value="ECO:0007669"/>
    <property type="project" value="UniProtKB-UniRule"/>
</dbReference>
<dbReference type="GO" id="GO:0008270">
    <property type="term" value="F:zinc ion binding"/>
    <property type="evidence" value="ECO:0007669"/>
    <property type="project" value="InterPro"/>
</dbReference>
<dbReference type="GO" id="GO:0051301">
    <property type="term" value="P:cell division"/>
    <property type="evidence" value="ECO:0007669"/>
    <property type="project" value="TreeGrafter"/>
</dbReference>
<dbReference type="GO" id="GO:0051603">
    <property type="term" value="P:proteolysis involved in protein catabolic process"/>
    <property type="evidence" value="ECO:0007669"/>
    <property type="project" value="TreeGrafter"/>
</dbReference>
<dbReference type="CDD" id="cd19497">
    <property type="entry name" value="RecA-like_ClpX"/>
    <property type="match status" value="1"/>
</dbReference>
<dbReference type="FunFam" id="1.10.8.60:FF:000002">
    <property type="entry name" value="ATP-dependent Clp protease ATP-binding subunit ClpX"/>
    <property type="match status" value="1"/>
</dbReference>
<dbReference type="FunFam" id="3.40.50.300:FF:000005">
    <property type="entry name" value="ATP-dependent Clp protease ATP-binding subunit ClpX"/>
    <property type="match status" value="1"/>
</dbReference>
<dbReference type="Gene3D" id="1.10.8.60">
    <property type="match status" value="1"/>
</dbReference>
<dbReference type="Gene3D" id="6.20.220.10">
    <property type="entry name" value="ClpX chaperone, C4-type zinc finger domain"/>
    <property type="match status" value="1"/>
</dbReference>
<dbReference type="Gene3D" id="3.40.50.300">
    <property type="entry name" value="P-loop containing nucleotide triphosphate hydrolases"/>
    <property type="match status" value="1"/>
</dbReference>
<dbReference type="HAMAP" id="MF_00175">
    <property type="entry name" value="ClpX"/>
    <property type="match status" value="1"/>
</dbReference>
<dbReference type="InterPro" id="IPR003593">
    <property type="entry name" value="AAA+_ATPase"/>
</dbReference>
<dbReference type="InterPro" id="IPR050052">
    <property type="entry name" value="ATP-dep_Clp_protease_ClpX"/>
</dbReference>
<dbReference type="InterPro" id="IPR003959">
    <property type="entry name" value="ATPase_AAA_core"/>
</dbReference>
<dbReference type="InterPro" id="IPR019489">
    <property type="entry name" value="Clp_ATPase_C"/>
</dbReference>
<dbReference type="InterPro" id="IPR004487">
    <property type="entry name" value="Clp_protease_ATP-bd_su_ClpX"/>
</dbReference>
<dbReference type="InterPro" id="IPR046425">
    <property type="entry name" value="ClpX_bact"/>
</dbReference>
<dbReference type="InterPro" id="IPR027417">
    <property type="entry name" value="P-loop_NTPase"/>
</dbReference>
<dbReference type="InterPro" id="IPR010603">
    <property type="entry name" value="Znf_CppX_C4"/>
</dbReference>
<dbReference type="InterPro" id="IPR038366">
    <property type="entry name" value="Znf_CppX_C4_sf"/>
</dbReference>
<dbReference type="NCBIfam" id="TIGR00382">
    <property type="entry name" value="clpX"/>
    <property type="match status" value="1"/>
</dbReference>
<dbReference type="NCBIfam" id="NF003745">
    <property type="entry name" value="PRK05342.1"/>
    <property type="match status" value="1"/>
</dbReference>
<dbReference type="PANTHER" id="PTHR48102:SF7">
    <property type="entry name" value="ATP-DEPENDENT CLP PROTEASE ATP-BINDING SUBUNIT CLPX-LIKE, MITOCHONDRIAL"/>
    <property type="match status" value="1"/>
</dbReference>
<dbReference type="PANTHER" id="PTHR48102">
    <property type="entry name" value="ATP-DEPENDENT CLP PROTEASE ATP-BINDING SUBUNIT CLPX-LIKE, MITOCHONDRIAL-RELATED"/>
    <property type="match status" value="1"/>
</dbReference>
<dbReference type="Pfam" id="PF07724">
    <property type="entry name" value="AAA_2"/>
    <property type="match status" value="1"/>
</dbReference>
<dbReference type="Pfam" id="PF10431">
    <property type="entry name" value="ClpB_D2-small"/>
    <property type="match status" value="1"/>
</dbReference>
<dbReference type="Pfam" id="PF06689">
    <property type="entry name" value="zf-C4_ClpX"/>
    <property type="match status" value="1"/>
</dbReference>
<dbReference type="SMART" id="SM00382">
    <property type="entry name" value="AAA"/>
    <property type="match status" value="1"/>
</dbReference>
<dbReference type="SMART" id="SM01086">
    <property type="entry name" value="ClpB_D2-small"/>
    <property type="match status" value="1"/>
</dbReference>
<dbReference type="SMART" id="SM00994">
    <property type="entry name" value="zf-C4_ClpX"/>
    <property type="match status" value="1"/>
</dbReference>
<dbReference type="SUPFAM" id="SSF57716">
    <property type="entry name" value="Glucocorticoid receptor-like (DNA-binding domain)"/>
    <property type="match status" value="1"/>
</dbReference>
<dbReference type="SUPFAM" id="SSF52540">
    <property type="entry name" value="P-loop containing nucleoside triphosphate hydrolases"/>
    <property type="match status" value="1"/>
</dbReference>
<dbReference type="PROSITE" id="PS51902">
    <property type="entry name" value="CLPX_ZB"/>
    <property type="match status" value="1"/>
</dbReference>
<sequence>MAKFDAHLKCSFCGKSQEQVRKLIAGPGVYICDECIDLCNEILDEELVDGQAGARQGQGDASRKQAAPRKPSKPAPTLATIPKPQEIKAHLDEQVVGQNDAKKVLSVAVYNHYKRLAWQGDGSTEPESSATRLHKSNILLIGPTGCGKTLLAQTLAEMMEVPFAVADATTLTEAGYVGEDVENILLRLLQKADGDVEQAQRGIIYIDEIDKIARKSENPSITRDVSGEGVQQALLKMLEGTVANVPPQGGRKHPYQDCIQIDTSQILFICGGAFVGLDDVIQRRMGRNAIGFVPGETRNGRSRQKDQEASQVLRNLEPDDLVKYGLIPEFIGRIPVSAVLEPLDEQALEAILTEPRDALVKQFQTLLSMDSVRLEFQPEAVRAIAREAHRRKTGARALRGIIEDLMLDLMYDLPSQNEVQKFVITEELVDECHGNKVLPHPSSLEQQSA</sequence>